<evidence type="ECO:0000255" key="1"/>
<evidence type="ECO:0000305" key="2"/>
<protein>
    <recommendedName>
        <fullName>Putative membrane-bound acyltransferase YfiQ</fullName>
        <ecNumber>2.3.-.-</ecNumber>
    </recommendedName>
</protein>
<gene>
    <name type="primary">yfiQ</name>
    <name type="ordered locus">BSU08360</name>
</gene>
<sequence>MQIKEIFMIRCISCLSVVLLHIISMVLMLQAEALADISHTVDSFRTLLMFSTPAFIFISEFLLARSYPDGVPDGFLKKRGKVIFVPFLFIAAIDALLMTSAMGGEVTFLAFVQKYLANVFLGNFIGYFILVIFQFYMLHMMFHEYLKKASPKWVLSISFVVTAAYLGYFSAASPAPASEEGGAFPFFWVPFAGWLFYFCLAYYCGKEYKRFLALLNQYRWVVYGAAIASGALVVTVSYVGEIGMISSKRPDIMLYSTSMIFLCFHLFSKMKHVPKIMMFISNYSFSIYLLHAYFMIIGYVLLLNMPEIPAVPAVLLLFAVCTAGPIMTSWALNKFKYGYLFVGKIYQPKQKKVTVEVRDHAG</sequence>
<comment type="subcellular location">
    <subcellularLocation>
        <location evidence="2">Cell membrane</location>
        <topology evidence="2">Multi-pass membrane protein</topology>
    </subcellularLocation>
</comment>
<comment type="similarity">
    <text evidence="2">Belongs to the acyltransferase 3 family.</text>
</comment>
<keyword id="KW-0012">Acyltransferase</keyword>
<keyword id="KW-1003">Cell membrane</keyword>
<keyword id="KW-0472">Membrane</keyword>
<keyword id="KW-1185">Reference proteome</keyword>
<keyword id="KW-0808">Transferase</keyword>
<keyword id="KW-0812">Transmembrane</keyword>
<keyword id="KW-1133">Transmembrane helix</keyword>
<proteinExistence type="inferred from homology"/>
<name>YFIQ_BACSU</name>
<dbReference type="EC" id="2.3.-.-"/>
<dbReference type="EMBL" id="D85082">
    <property type="protein sequence ID" value="BAA24457.1"/>
    <property type="molecule type" value="Genomic_DNA"/>
</dbReference>
<dbReference type="EMBL" id="AL009126">
    <property type="protein sequence ID" value="CAB12665.1"/>
    <property type="molecule type" value="Genomic_DNA"/>
</dbReference>
<dbReference type="PIR" id="C69804">
    <property type="entry name" value="C69804"/>
</dbReference>
<dbReference type="RefSeq" id="WP_003242504.1">
    <property type="nucleotide sequence ID" value="NZ_OZ025638.1"/>
</dbReference>
<dbReference type="FunCoup" id="O31559">
    <property type="interactions" value="68"/>
</dbReference>
<dbReference type="STRING" id="224308.BSU08360"/>
<dbReference type="PaxDb" id="224308-BSU08360"/>
<dbReference type="EnsemblBacteria" id="CAB12665">
    <property type="protein sequence ID" value="CAB12665"/>
    <property type="gene ID" value="BSU_08360"/>
</dbReference>
<dbReference type="GeneID" id="936185"/>
<dbReference type="KEGG" id="bsu:BSU08360"/>
<dbReference type="PATRIC" id="fig|224308.179.peg.904"/>
<dbReference type="eggNOG" id="COG3936">
    <property type="taxonomic scope" value="Bacteria"/>
</dbReference>
<dbReference type="InParanoid" id="O31559"/>
<dbReference type="OrthoDB" id="65129at2"/>
<dbReference type="BioCyc" id="BSUB:BSU08360-MONOMER"/>
<dbReference type="Proteomes" id="UP000001570">
    <property type="component" value="Chromosome"/>
</dbReference>
<dbReference type="GO" id="GO:0005886">
    <property type="term" value="C:plasma membrane"/>
    <property type="evidence" value="ECO:0000318"/>
    <property type="project" value="GO_Central"/>
</dbReference>
<dbReference type="GO" id="GO:0016413">
    <property type="term" value="F:O-acetyltransferase activity"/>
    <property type="evidence" value="ECO:0000318"/>
    <property type="project" value="GO_Central"/>
</dbReference>
<dbReference type="GO" id="GO:0009246">
    <property type="term" value="P:enterobacterial common antigen biosynthetic process"/>
    <property type="evidence" value="ECO:0000318"/>
    <property type="project" value="GO_Central"/>
</dbReference>
<dbReference type="InterPro" id="IPR002656">
    <property type="entry name" value="Acyl_transf_3_dom"/>
</dbReference>
<dbReference type="PANTHER" id="PTHR40074">
    <property type="entry name" value="O-ACETYLTRANSFERASE WECH"/>
    <property type="match status" value="1"/>
</dbReference>
<dbReference type="PANTHER" id="PTHR40074:SF2">
    <property type="entry name" value="O-ACETYLTRANSFERASE WECH"/>
    <property type="match status" value="1"/>
</dbReference>
<dbReference type="Pfam" id="PF01757">
    <property type="entry name" value="Acyl_transf_3"/>
    <property type="match status" value="1"/>
</dbReference>
<feature type="chain" id="PRO_0000360839" description="Putative membrane-bound acyltransferase YfiQ">
    <location>
        <begin position="1"/>
        <end position="362"/>
    </location>
</feature>
<feature type="transmembrane region" description="Helical" evidence="1">
    <location>
        <begin position="11"/>
        <end position="31"/>
    </location>
</feature>
<feature type="transmembrane region" description="Helical" evidence="1">
    <location>
        <begin position="44"/>
        <end position="64"/>
    </location>
</feature>
<feature type="transmembrane region" description="Helical" evidence="1">
    <location>
        <begin position="82"/>
        <end position="102"/>
    </location>
</feature>
<feature type="transmembrane region" description="Helical" evidence="1">
    <location>
        <begin position="119"/>
        <end position="139"/>
    </location>
</feature>
<feature type="transmembrane region" description="Helical" evidence="1">
    <location>
        <begin position="153"/>
        <end position="173"/>
    </location>
</feature>
<feature type="transmembrane region" description="Helical" evidence="1">
    <location>
        <begin position="181"/>
        <end position="201"/>
    </location>
</feature>
<feature type="transmembrane region" description="Helical" evidence="1">
    <location>
        <begin position="220"/>
        <end position="240"/>
    </location>
</feature>
<feature type="transmembrane region" description="Helical" evidence="1">
    <location>
        <begin position="252"/>
        <end position="267"/>
    </location>
</feature>
<feature type="transmembrane region" description="Helical" evidence="1">
    <location>
        <begin position="283"/>
        <end position="303"/>
    </location>
</feature>
<feature type="transmembrane region" description="Helical" evidence="1">
    <location>
        <begin position="308"/>
        <end position="328"/>
    </location>
</feature>
<accession>O31559</accession>
<accession>Q79EX0</accession>
<reference key="1">
    <citation type="journal article" date="1996" name="DNA Res.">
        <title>Cloning and sequencing of a 27.8-kb nucleotide sequence of the 79 degrees-81 degrees region of the Bacillus subtilis genome containing the sspE locus.</title>
        <authorList>
            <person name="Yamamoto H."/>
            <person name="Uchiyama S."/>
            <person name="Sekiguchi J."/>
        </authorList>
    </citation>
    <scope>NUCLEOTIDE SEQUENCE [GENOMIC DNA]</scope>
</reference>
<reference key="2">
    <citation type="journal article" date="1997" name="Nature">
        <title>The complete genome sequence of the Gram-positive bacterium Bacillus subtilis.</title>
        <authorList>
            <person name="Kunst F."/>
            <person name="Ogasawara N."/>
            <person name="Moszer I."/>
            <person name="Albertini A.M."/>
            <person name="Alloni G."/>
            <person name="Azevedo V."/>
            <person name="Bertero M.G."/>
            <person name="Bessieres P."/>
            <person name="Bolotin A."/>
            <person name="Borchert S."/>
            <person name="Borriss R."/>
            <person name="Boursier L."/>
            <person name="Brans A."/>
            <person name="Braun M."/>
            <person name="Brignell S.C."/>
            <person name="Bron S."/>
            <person name="Brouillet S."/>
            <person name="Bruschi C.V."/>
            <person name="Caldwell B."/>
            <person name="Capuano V."/>
            <person name="Carter N.M."/>
            <person name="Choi S.-K."/>
            <person name="Codani J.-J."/>
            <person name="Connerton I.F."/>
            <person name="Cummings N.J."/>
            <person name="Daniel R.A."/>
            <person name="Denizot F."/>
            <person name="Devine K.M."/>
            <person name="Duesterhoeft A."/>
            <person name="Ehrlich S.D."/>
            <person name="Emmerson P.T."/>
            <person name="Entian K.-D."/>
            <person name="Errington J."/>
            <person name="Fabret C."/>
            <person name="Ferrari E."/>
            <person name="Foulger D."/>
            <person name="Fritz C."/>
            <person name="Fujita M."/>
            <person name="Fujita Y."/>
            <person name="Fuma S."/>
            <person name="Galizzi A."/>
            <person name="Galleron N."/>
            <person name="Ghim S.-Y."/>
            <person name="Glaser P."/>
            <person name="Goffeau A."/>
            <person name="Golightly E.J."/>
            <person name="Grandi G."/>
            <person name="Guiseppi G."/>
            <person name="Guy B.J."/>
            <person name="Haga K."/>
            <person name="Haiech J."/>
            <person name="Harwood C.R."/>
            <person name="Henaut A."/>
            <person name="Hilbert H."/>
            <person name="Holsappel S."/>
            <person name="Hosono S."/>
            <person name="Hullo M.-F."/>
            <person name="Itaya M."/>
            <person name="Jones L.-M."/>
            <person name="Joris B."/>
            <person name="Karamata D."/>
            <person name="Kasahara Y."/>
            <person name="Klaerr-Blanchard M."/>
            <person name="Klein C."/>
            <person name="Kobayashi Y."/>
            <person name="Koetter P."/>
            <person name="Koningstein G."/>
            <person name="Krogh S."/>
            <person name="Kumano M."/>
            <person name="Kurita K."/>
            <person name="Lapidus A."/>
            <person name="Lardinois S."/>
            <person name="Lauber J."/>
            <person name="Lazarevic V."/>
            <person name="Lee S.-M."/>
            <person name="Levine A."/>
            <person name="Liu H."/>
            <person name="Masuda S."/>
            <person name="Mauel C."/>
            <person name="Medigue C."/>
            <person name="Medina N."/>
            <person name="Mellado R.P."/>
            <person name="Mizuno M."/>
            <person name="Moestl D."/>
            <person name="Nakai S."/>
            <person name="Noback M."/>
            <person name="Noone D."/>
            <person name="O'Reilly M."/>
            <person name="Ogawa K."/>
            <person name="Ogiwara A."/>
            <person name="Oudega B."/>
            <person name="Park S.-H."/>
            <person name="Parro V."/>
            <person name="Pohl T.M."/>
            <person name="Portetelle D."/>
            <person name="Porwollik S."/>
            <person name="Prescott A.M."/>
            <person name="Presecan E."/>
            <person name="Pujic P."/>
            <person name="Purnelle B."/>
            <person name="Rapoport G."/>
            <person name="Rey M."/>
            <person name="Reynolds S."/>
            <person name="Rieger M."/>
            <person name="Rivolta C."/>
            <person name="Rocha E."/>
            <person name="Roche B."/>
            <person name="Rose M."/>
            <person name="Sadaie Y."/>
            <person name="Sato T."/>
            <person name="Scanlan E."/>
            <person name="Schleich S."/>
            <person name="Schroeter R."/>
            <person name="Scoffone F."/>
            <person name="Sekiguchi J."/>
            <person name="Sekowska A."/>
            <person name="Seror S.J."/>
            <person name="Serror P."/>
            <person name="Shin B.-S."/>
            <person name="Soldo B."/>
            <person name="Sorokin A."/>
            <person name="Tacconi E."/>
            <person name="Takagi T."/>
            <person name="Takahashi H."/>
            <person name="Takemaru K."/>
            <person name="Takeuchi M."/>
            <person name="Tamakoshi A."/>
            <person name="Tanaka T."/>
            <person name="Terpstra P."/>
            <person name="Tognoni A."/>
            <person name="Tosato V."/>
            <person name="Uchiyama S."/>
            <person name="Vandenbol M."/>
            <person name="Vannier F."/>
            <person name="Vassarotti A."/>
            <person name="Viari A."/>
            <person name="Wambutt R."/>
            <person name="Wedler E."/>
            <person name="Wedler H."/>
            <person name="Weitzenegger T."/>
            <person name="Winters P."/>
            <person name="Wipat A."/>
            <person name="Yamamoto H."/>
            <person name="Yamane K."/>
            <person name="Yasumoto K."/>
            <person name="Yata K."/>
            <person name="Yoshida K."/>
            <person name="Yoshikawa H.-F."/>
            <person name="Zumstein E."/>
            <person name="Yoshikawa H."/>
            <person name="Danchin A."/>
        </authorList>
    </citation>
    <scope>NUCLEOTIDE SEQUENCE [LARGE SCALE GENOMIC DNA]</scope>
    <source>
        <strain>168</strain>
    </source>
</reference>
<organism>
    <name type="scientific">Bacillus subtilis (strain 168)</name>
    <dbReference type="NCBI Taxonomy" id="224308"/>
    <lineage>
        <taxon>Bacteria</taxon>
        <taxon>Bacillati</taxon>
        <taxon>Bacillota</taxon>
        <taxon>Bacilli</taxon>
        <taxon>Bacillales</taxon>
        <taxon>Bacillaceae</taxon>
        <taxon>Bacillus</taxon>
    </lineage>
</organism>